<protein>
    <recommendedName>
        <fullName evidence="1">tRNA(Met) cytidine acetate ligase</fullName>
        <ecNumber evidence="1">6.3.4.-</ecNumber>
    </recommendedName>
</protein>
<organism>
    <name type="scientific">Fervidobacterium nodosum (strain ATCC 35602 / DSM 5306 / Rt17-B1)</name>
    <dbReference type="NCBI Taxonomy" id="381764"/>
    <lineage>
        <taxon>Bacteria</taxon>
        <taxon>Thermotogati</taxon>
        <taxon>Thermotogota</taxon>
        <taxon>Thermotogae</taxon>
        <taxon>Thermotogales</taxon>
        <taxon>Fervidobacteriaceae</taxon>
        <taxon>Fervidobacterium</taxon>
    </lineage>
</organism>
<reference key="1">
    <citation type="submission" date="2007-07" db="EMBL/GenBank/DDBJ databases">
        <title>Complete sequence of Fervidobacterium nodosum Rt17-B1.</title>
        <authorList>
            <consortium name="US DOE Joint Genome Institute"/>
            <person name="Copeland A."/>
            <person name="Lucas S."/>
            <person name="Lapidus A."/>
            <person name="Barry K."/>
            <person name="Glavina del Rio T."/>
            <person name="Dalin E."/>
            <person name="Tice H."/>
            <person name="Pitluck S."/>
            <person name="Saunders E."/>
            <person name="Brettin T."/>
            <person name="Bruce D."/>
            <person name="Detter J.C."/>
            <person name="Han C."/>
            <person name="Schmutz J."/>
            <person name="Larimer F."/>
            <person name="Land M."/>
            <person name="Hauser L."/>
            <person name="Kyrpides N."/>
            <person name="Mikhailova N."/>
            <person name="Nelson K."/>
            <person name="Gogarten J.P."/>
            <person name="Noll K."/>
            <person name="Richardson P."/>
        </authorList>
    </citation>
    <scope>NUCLEOTIDE SEQUENCE [LARGE SCALE GENOMIC DNA]</scope>
    <source>
        <strain>ATCC 35602 / DSM 5306 / Rt17-B1</strain>
    </source>
</reference>
<name>TMCAL_FERNB</name>
<proteinExistence type="inferred from homology"/>
<keyword id="KW-0067">ATP-binding</keyword>
<keyword id="KW-0963">Cytoplasm</keyword>
<keyword id="KW-0436">Ligase</keyword>
<keyword id="KW-0547">Nucleotide-binding</keyword>
<keyword id="KW-1185">Reference proteome</keyword>
<keyword id="KW-0694">RNA-binding</keyword>
<keyword id="KW-0819">tRNA processing</keyword>
<keyword id="KW-0820">tRNA-binding</keyword>
<feature type="chain" id="PRO_1000073550" description="tRNA(Met) cytidine acetate ligase">
    <location>
        <begin position="1"/>
        <end position="425"/>
    </location>
</feature>
<feature type="binding site" evidence="1">
    <location>
        <begin position="7"/>
        <end position="20"/>
    </location>
    <ligand>
        <name>ATP</name>
        <dbReference type="ChEBI" id="CHEBI:30616"/>
    </ligand>
</feature>
<feature type="binding site" evidence="1">
    <location>
        <position position="102"/>
    </location>
    <ligand>
        <name>ATP</name>
        <dbReference type="ChEBI" id="CHEBI:30616"/>
    </ligand>
</feature>
<feature type="binding site" evidence="1">
    <location>
        <position position="162"/>
    </location>
    <ligand>
        <name>ATP</name>
        <dbReference type="ChEBI" id="CHEBI:30616"/>
    </ligand>
</feature>
<feature type="binding site" evidence="1">
    <location>
        <begin position="187"/>
        <end position="188"/>
    </location>
    <ligand>
        <name>ATP</name>
        <dbReference type="ChEBI" id="CHEBI:30616"/>
    </ligand>
</feature>
<accession>A7HNV7</accession>
<sequence>MRVLGIVVEYNPFHFGHLHHLEEAKKLINPDYVVAVMSGNFCQRGEPAIVNKFARTEIALKNGVDVVFELPVVYAIQDAGGFALGSVGVLDRTGVVTDIVFGSESGDVTFLRKVANLLTNQTPEFEKTFKRHLKMGYSYPNARKYALMDVLSNDVEKLSKSNDILGIEYIKALIKYSSDIQPHVIKRIGADYNDEQFKGKFSSASAVRKAIKENKFEQTKEALPEWTFKILEREFSEGRGPVFLEYFDFVIAMFRKLKREDFERIYSFNEGLDLRFYESARESGNLQDFVERVKAKRFTYSRIRRAIFHVLFDMEKSFVELSNEKGPQYLRVLGFTKRGRELLKAMKKNSKVPIISTASLYRNVLEEAKKKIAEGKVSWEIDESLYIWQFERDLLASDIYTFLYPNKFQRKAGMDFEYKVIEMLG</sequence>
<dbReference type="EC" id="6.3.4.-" evidence="1"/>
<dbReference type="EMBL" id="CP000771">
    <property type="protein sequence ID" value="ABS61590.1"/>
    <property type="molecule type" value="Genomic_DNA"/>
</dbReference>
<dbReference type="RefSeq" id="WP_011994881.1">
    <property type="nucleotide sequence ID" value="NC_009718.1"/>
</dbReference>
<dbReference type="SMR" id="A7HNV7"/>
<dbReference type="STRING" id="381764.Fnod_1757"/>
<dbReference type="KEGG" id="fno:Fnod_1757"/>
<dbReference type="eggNOG" id="COG1323">
    <property type="taxonomic scope" value="Bacteria"/>
</dbReference>
<dbReference type="HOGENOM" id="CLU_038915_0_2_0"/>
<dbReference type="OrthoDB" id="9769796at2"/>
<dbReference type="Proteomes" id="UP000002415">
    <property type="component" value="Chromosome"/>
</dbReference>
<dbReference type="GO" id="GO:0005737">
    <property type="term" value="C:cytoplasm"/>
    <property type="evidence" value="ECO:0007669"/>
    <property type="project" value="UniProtKB-SubCell"/>
</dbReference>
<dbReference type="GO" id="GO:0005524">
    <property type="term" value="F:ATP binding"/>
    <property type="evidence" value="ECO:0007669"/>
    <property type="project" value="UniProtKB-KW"/>
</dbReference>
<dbReference type="GO" id="GO:0016879">
    <property type="term" value="F:ligase activity, forming carbon-nitrogen bonds"/>
    <property type="evidence" value="ECO:0007669"/>
    <property type="project" value="UniProtKB-UniRule"/>
</dbReference>
<dbReference type="GO" id="GO:0000049">
    <property type="term" value="F:tRNA binding"/>
    <property type="evidence" value="ECO:0007669"/>
    <property type="project" value="UniProtKB-KW"/>
</dbReference>
<dbReference type="GO" id="GO:0006400">
    <property type="term" value="P:tRNA modification"/>
    <property type="evidence" value="ECO:0007669"/>
    <property type="project" value="UniProtKB-UniRule"/>
</dbReference>
<dbReference type="Gene3D" id="3.40.50.620">
    <property type="entry name" value="HUPs"/>
    <property type="match status" value="1"/>
</dbReference>
<dbReference type="HAMAP" id="MF_01539">
    <property type="entry name" value="TmcAL"/>
    <property type="match status" value="1"/>
</dbReference>
<dbReference type="InterPro" id="IPR014729">
    <property type="entry name" value="Rossmann-like_a/b/a_fold"/>
</dbReference>
<dbReference type="InterPro" id="IPR008513">
    <property type="entry name" value="tRNA(Met)_cyd_acetate_ligase"/>
</dbReference>
<dbReference type="NCBIfam" id="NF010191">
    <property type="entry name" value="PRK13670.1"/>
    <property type="match status" value="1"/>
</dbReference>
<dbReference type="PANTHER" id="PTHR37825">
    <property type="entry name" value="TRNA(MET) CYTIDINE ACETATE LIGASE"/>
    <property type="match status" value="1"/>
</dbReference>
<dbReference type="PANTHER" id="PTHR37825:SF1">
    <property type="entry name" value="TRNA(MET) CYTIDINE ACETATE LIGASE"/>
    <property type="match status" value="1"/>
</dbReference>
<dbReference type="Pfam" id="PF05636">
    <property type="entry name" value="HIGH_NTase1"/>
    <property type="match status" value="1"/>
</dbReference>
<dbReference type="SUPFAM" id="SSF52374">
    <property type="entry name" value="Nucleotidylyl transferase"/>
    <property type="match status" value="1"/>
</dbReference>
<comment type="function">
    <text evidence="1">Catalyzes the formation of N(4)-acetylcytidine (ac(4)C) at the wobble position of elongator tRNA(Met), using acetate and ATP as substrates. First activates an acetate ion to form acetyladenylate (Ac-AMP) and then transfers the acetyl group to tRNA to form ac(4)C34.</text>
</comment>
<comment type="catalytic activity">
    <reaction evidence="1">
        <text>cytidine(34) in elongator tRNA(Met) + acetate + ATP = N(4)-acetylcytidine(34) in elongator tRNA(Met) + AMP + diphosphate</text>
        <dbReference type="Rhea" id="RHEA:58144"/>
        <dbReference type="Rhea" id="RHEA-COMP:10693"/>
        <dbReference type="Rhea" id="RHEA-COMP:10694"/>
        <dbReference type="ChEBI" id="CHEBI:30089"/>
        <dbReference type="ChEBI" id="CHEBI:30616"/>
        <dbReference type="ChEBI" id="CHEBI:33019"/>
        <dbReference type="ChEBI" id="CHEBI:74900"/>
        <dbReference type="ChEBI" id="CHEBI:82748"/>
        <dbReference type="ChEBI" id="CHEBI:456215"/>
    </reaction>
</comment>
<comment type="subcellular location">
    <subcellularLocation>
        <location evidence="1">Cytoplasm</location>
    </subcellularLocation>
</comment>
<comment type="similarity">
    <text evidence="1">Belongs to the TmcAL family.</text>
</comment>
<evidence type="ECO:0000255" key="1">
    <source>
        <dbReference type="HAMAP-Rule" id="MF_01539"/>
    </source>
</evidence>
<gene>
    <name evidence="1" type="primary">tmcAL</name>
    <name type="ordered locus">Fnod_1757</name>
</gene>